<dbReference type="EMBL" id="AM747720">
    <property type="protein sequence ID" value="CAR50553.1"/>
    <property type="molecule type" value="Genomic_DNA"/>
</dbReference>
<dbReference type="RefSeq" id="WP_006400652.1">
    <property type="nucleotide sequence ID" value="NC_011000.1"/>
</dbReference>
<dbReference type="SMR" id="B4E5C8"/>
<dbReference type="GeneID" id="98107152"/>
<dbReference type="KEGG" id="bcj:BCAL0242"/>
<dbReference type="eggNOG" id="COG0255">
    <property type="taxonomic scope" value="Bacteria"/>
</dbReference>
<dbReference type="HOGENOM" id="CLU_158491_1_1_4"/>
<dbReference type="BioCyc" id="BCEN216591:G1G1V-285-MONOMER"/>
<dbReference type="Proteomes" id="UP000001035">
    <property type="component" value="Chromosome 1"/>
</dbReference>
<dbReference type="GO" id="GO:0022625">
    <property type="term" value="C:cytosolic large ribosomal subunit"/>
    <property type="evidence" value="ECO:0007669"/>
    <property type="project" value="TreeGrafter"/>
</dbReference>
<dbReference type="GO" id="GO:0003735">
    <property type="term" value="F:structural constituent of ribosome"/>
    <property type="evidence" value="ECO:0007669"/>
    <property type="project" value="InterPro"/>
</dbReference>
<dbReference type="GO" id="GO:0006412">
    <property type="term" value="P:translation"/>
    <property type="evidence" value="ECO:0007669"/>
    <property type="project" value="UniProtKB-UniRule"/>
</dbReference>
<dbReference type="CDD" id="cd00427">
    <property type="entry name" value="Ribosomal_L29_HIP"/>
    <property type="match status" value="1"/>
</dbReference>
<dbReference type="FunFam" id="1.10.287.310:FF:000001">
    <property type="entry name" value="50S ribosomal protein L29"/>
    <property type="match status" value="1"/>
</dbReference>
<dbReference type="Gene3D" id="6.10.140.1970">
    <property type="match status" value="1"/>
</dbReference>
<dbReference type="HAMAP" id="MF_00374">
    <property type="entry name" value="Ribosomal_uL29"/>
    <property type="match status" value="1"/>
</dbReference>
<dbReference type="InterPro" id="IPR050063">
    <property type="entry name" value="Ribosomal_protein_uL29"/>
</dbReference>
<dbReference type="InterPro" id="IPR001854">
    <property type="entry name" value="Ribosomal_uL29"/>
</dbReference>
<dbReference type="InterPro" id="IPR018254">
    <property type="entry name" value="Ribosomal_uL29_CS"/>
</dbReference>
<dbReference type="InterPro" id="IPR036049">
    <property type="entry name" value="Ribosomal_uL29_sf"/>
</dbReference>
<dbReference type="NCBIfam" id="TIGR00012">
    <property type="entry name" value="L29"/>
    <property type="match status" value="1"/>
</dbReference>
<dbReference type="PANTHER" id="PTHR10916">
    <property type="entry name" value="60S RIBOSOMAL PROTEIN L35/50S RIBOSOMAL PROTEIN L29"/>
    <property type="match status" value="1"/>
</dbReference>
<dbReference type="PANTHER" id="PTHR10916:SF0">
    <property type="entry name" value="LARGE RIBOSOMAL SUBUNIT PROTEIN UL29C"/>
    <property type="match status" value="1"/>
</dbReference>
<dbReference type="Pfam" id="PF00831">
    <property type="entry name" value="Ribosomal_L29"/>
    <property type="match status" value="1"/>
</dbReference>
<dbReference type="SUPFAM" id="SSF46561">
    <property type="entry name" value="Ribosomal protein L29 (L29p)"/>
    <property type="match status" value="1"/>
</dbReference>
<dbReference type="PROSITE" id="PS00579">
    <property type="entry name" value="RIBOSOMAL_L29"/>
    <property type="match status" value="1"/>
</dbReference>
<name>RL29_BURCJ</name>
<reference key="1">
    <citation type="journal article" date="2009" name="J. Bacteriol.">
        <title>The genome of Burkholderia cenocepacia J2315, an epidemic pathogen of cystic fibrosis patients.</title>
        <authorList>
            <person name="Holden M.T."/>
            <person name="Seth-Smith H.M."/>
            <person name="Crossman L.C."/>
            <person name="Sebaihia M."/>
            <person name="Bentley S.D."/>
            <person name="Cerdeno-Tarraga A.M."/>
            <person name="Thomson N.R."/>
            <person name="Bason N."/>
            <person name="Quail M.A."/>
            <person name="Sharp S."/>
            <person name="Cherevach I."/>
            <person name="Churcher C."/>
            <person name="Goodhead I."/>
            <person name="Hauser H."/>
            <person name="Holroyd N."/>
            <person name="Mungall K."/>
            <person name="Scott P."/>
            <person name="Walker D."/>
            <person name="White B."/>
            <person name="Rose H."/>
            <person name="Iversen P."/>
            <person name="Mil-Homens D."/>
            <person name="Rocha E.P."/>
            <person name="Fialho A.M."/>
            <person name="Baldwin A."/>
            <person name="Dowson C."/>
            <person name="Barrell B.G."/>
            <person name="Govan J.R."/>
            <person name="Vandamme P."/>
            <person name="Hart C.A."/>
            <person name="Mahenthiralingam E."/>
            <person name="Parkhill J."/>
        </authorList>
    </citation>
    <scope>NUCLEOTIDE SEQUENCE [LARGE SCALE GENOMIC DNA]</scope>
    <source>
        <strain>ATCC BAA-245 / DSM 16553 / LMG 16656 / NCTC 13227 / J2315 / CF5610</strain>
    </source>
</reference>
<keyword id="KW-0687">Ribonucleoprotein</keyword>
<keyword id="KW-0689">Ribosomal protein</keyword>
<proteinExistence type="inferred from homology"/>
<organism>
    <name type="scientific">Burkholderia cenocepacia (strain ATCC BAA-245 / DSM 16553 / LMG 16656 / NCTC 13227 / J2315 / CF5610)</name>
    <name type="common">Burkholderia cepacia (strain J2315)</name>
    <dbReference type="NCBI Taxonomy" id="216591"/>
    <lineage>
        <taxon>Bacteria</taxon>
        <taxon>Pseudomonadati</taxon>
        <taxon>Pseudomonadota</taxon>
        <taxon>Betaproteobacteria</taxon>
        <taxon>Burkholderiales</taxon>
        <taxon>Burkholderiaceae</taxon>
        <taxon>Burkholderia</taxon>
        <taxon>Burkholderia cepacia complex</taxon>
    </lineage>
</organism>
<evidence type="ECO:0000255" key="1">
    <source>
        <dbReference type="HAMAP-Rule" id="MF_00374"/>
    </source>
</evidence>
<evidence type="ECO:0000305" key="2"/>
<sequence>MKASELLQKDQAALNKELADLLKAQFGLRMQLATQQLTNTSQLKKVRRDIARVRTVMTQKANQK</sequence>
<protein>
    <recommendedName>
        <fullName evidence="1">Large ribosomal subunit protein uL29</fullName>
    </recommendedName>
    <alternativeName>
        <fullName evidence="2">50S ribosomal protein L29</fullName>
    </alternativeName>
</protein>
<feature type="chain" id="PRO_1000121741" description="Large ribosomal subunit protein uL29">
    <location>
        <begin position="1"/>
        <end position="64"/>
    </location>
</feature>
<gene>
    <name evidence="1" type="primary">rpmC</name>
    <name type="ordered locus">BceJ2315_02450</name>
    <name type="ORF">BCAL0242</name>
</gene>
<accession>B4E5C8</accession>
<comment type="similarity">
    <text evidence="1">Belongs to the universal ribosomal protein uL29 family.</text>
</comment>